<feature type="chain" id="PRO_0000267937" description="Large ribosomal subunit protein bL17">
    <location>
        <begin position="1"/>
        <end position="127"/>
    </location>
</feature>
<sequence>MRHRKSGRQLNRNSSHRQAMFRNMAGSLVRHEIIKTTLPKAKELRRVVEPLITLAKTDSVANRRLAFARTRDNEIVAKLFNELGPRFASRAGGYTRILKCGFRAGDNAPMAYIELVDRSEKTEAAAE</sequence>
<dbReference type="EMBL" id="AE017220">
    <property type="protein sequence ID" value="AAX67255.1"/>
    <property type="molecule type" value="Genomic_DNA"/>
</dbReference>
<dbReference type="RefSeq" id="WP_001216370.1">
    <property type="nucleotide sequence ID" value="NC_006905.1"/>
</dbReference>
<dbReference type="SMR" id="Q57J57"/>
<dbReference type="GeneID" id="89546962"/>
<dbReference type="KEGG" id="sec:SCH_3349"/>
<dbReference type="HOGENOM" id="CLU_074407_2_0_6"/>
<dbReference type="Proteomes" id="UP000000538">
    <property type="component" value="Chromosome"/>
</dbReference>
<dbReference type="GO" id="GO:0022625">
    <property type="term" value="C:cytosolic large ribosomal subunit"/>
    <property type="evidence" value="ECO:0007669"/>
    <property type="project" value="TreeGrafter"/>
</dbReference>
<dbReference type="GO" id="GO:0003735">
    <property type="term" value="F:structural constituent of ribosome"/>
    <property type="evidence" value="ECO:0007669"/>
    <property type="project" value="InterPro"/>
</dbReference>
<dbReference type="GO" id="GO:0006412">
    <property type="term" value="P:translation"/>
    <property type="evidence" value="ECO:0007669"/>
    <property type="project" value="UniProtKB-UniRule"/>
</dbReference>
<dbReference type="FunFam" id="3.90.1030.10:FF:000001">
    <property type="entry name" value="50S ribosomal protein L17"/>
    <property type="match status" value="1"/>
</dbReference>
<dbReference type="Gene3D" id="3.90.1030.10">
    <property type="entry name" value="Ribosomal protein L17"/>
    <property type="match status" value="1"/>
</dbReference>
<dbReference type="HAMAP" id="MF_01368">
    <property type="entry name" value="Ribosomal_bL17"/>
    <property type="match status" value="1"/>
</dbReference>
<dbReference type="InterPro" id="IPR000456">
    <property type="entry name" value="Ribosomal_bL17"/>
</dbReference>
<dbReference type="InterPro" id="IPR047859">
    <property type="entry name" value="Ribosomal_bL17_CS"/>
</dbReference>
<dbReference type="InterPro" id="IPR036373">
    <property type="entry name" value="Ribosomal_bL17_sf"/>
</dbReference>
<dbReference type="NCBIfam" id="TIGR00059">
    <property type="entry name" value="L17"/>
    <property type="match status" value="1"/>
</dbReference>
<dbReference type="PANTHER" id="PTHR14413:SF16">
    <property type="entry name" value="LARGE RIBOSOMAL SUBUNIT PROTEIN BL17M"/>
    <property type="match status" value="1"/>
</dbReference>
<dbReference type="PANTHER" id="PTHR14413">
    <property type="entry name" value="RIBOSOMAL PROTEIN L17"/>
    <property type="match status" value="1"/>
</dbReference>
<dbReference type="Pfam" id="PF01196">
    <property type="entry name" value="Ribosomal_L17"/>
    <property type="match status" value="1"/>
</dbReference>
<dbReference type="SUPFAM" id="SSF64263">
    <property type="entry name" value="Prokaryotic ribosomal protein L17"/>
    <property type="match status" value="1"/>
</dbReference>
<dbReference type="PROSITE" id="PS01167">
    <property type="entry name" value="RIBOSOMAL_L17"/>
    <property type="match status" value="1"/>
</dbReference>
<gene>
    <name evidence="1" type="primary">rplQ</name>
    <name type="ordered locus">SCH_3349</name>
</gene>
<proteinExistence type="inferred from homology"/>
<name>RL17_SALCH</name>
<comment type="subunit">
    <text evidence="1">Part of the 50S ribosomal subunit. Contacts protein L32.</text>
</comment>
<comment type="similarity">
    <text evidence="1">Belongs to the bacterial ribosomal protein bL17 family.</text>
</comment>
<protein>
    <recommendedName>
        <fullName evidence="1">Large ribosomal subunit protein bL17</fullName>
    </recommendedName>
    <alternativeName>
        <fullName evidence="2">50S ribosomal protein L17</fullName>
    </alternativeName>
</protein>
<evidence type="ECO:0000255" key="1">
    <source>
        <dbReference type="HAMAP-Rule" id="MF_01368"/>
    </source>
</evidence>
<evidence type="ECO:0000305" key="2"/>
<accession>Q57J57</accession>
<organism>
    <name type="scientific">Salmonella choleraesuis (strain SC-B67)</name>
    <dbReference type="NCBI Taxonomy" id="321314"/>
    <lineage>
        <taxon>Bacteria</taxon>
        <taxon>Pseudomonadati</taxon>
        <taxon>Pseudomonadota</taxon>
        <taxon>Gammaproteobacteria</taxon>
        <taxon>Enterobacterales</taxon>
        <taxon>Enterobacteriaceae</taxon>
        <taxon>Salmonella</taxon>
    </lineage>
</organism>
<keyword id="KW-0687">Ribonucleoprotein</keyword>
<keyword id="KW-0689">Ribosomal protein</keyword>
<reference key="1">
    <citation type="journal article" date="2005" name="Nucleic Acids Res.">
        <title>The genome sequence of Salmonella enterica serovar Choleraesuis, a highly invasive and resistant zoonotic pathogen.</title>
        <authorList>
            <person name="Chiu C.-H."/>
            <person name="Tang P."/>
            <person name="Chu C."/>
            <person name="Hu S."/>
            <person name="Bao Q."/>
            <person name="Yu J."/>
            <person name="Chou Y.-Y."/>
            <person name="Wang H.-S."/>
            <person name="Lee Y.-S."/>
        </authorList>
    </citation>
    <scope>NUCLEOTIDE SEQUENCE [LARGE SCALE GENOMIC DNA]</scope>
    <source>
        <strain>SC-B67</strain>
    </source>
</reference>